<accession>B4PUG5</accession>
<proteinExistence type="inferred from homology"/>
<feature type="chain" id="PRO_0000364319" description="Eukaryotic translation initiation factor 3 subunit F-1">
    <location>
        <begin position="1"/>
        <end position="280"/>
    </location>
</feature>
<feature type="domain" description="MPN" evidence="2">
    <location>
        <begin position="8"/>
        <end position="138"/>
    </location>
</feature>
<evidence type="ECO:0000255" key="1">
    <source>
        <dbReference type="HAMAP-Rule" id="MF_03005"/>
    </source>
</evidence>
<evidence type="ECO:0000255" key="2">
    <source>
        <dbReference type="PROSITE-ProRule" id="PRU01182"/>
    </source>
</evidence>
<name>EI3F1_DROYA</name>
<sequence>MSALNLTVRVHPVVLFQVVDAFERRNADSHRVIGTLLGSVDKGVVEVTNCFCVPHKEHDDQVEAELSYALDMYDLNRKVNSNESVVGWWATGNDVTNHSSVIHEYYARECNNPVHLTVDTSLQGGRMGLRAYVCIQLGVPGGKSGCMFTPIPVELTSYEPETFGLKLLQKTVGVSPAHRPKTVPPMLDLAQISEASTKLQSLLDLILKYVDDVIAHKVTPDNAVGRQLLDLIHSVPHMTHEQFTQMFNANVRNLLLVITLSQLIKTQLQLNEKLTFLPAA</sequence>
<gene>
    <name evidence="1" type="primary">eIF3f1</name>
    <name evidence="1" type="synonym">eIF3-S5-1</name>
    <name type="ORF">GE25339</name>
</gene>
<comment type="function">
    <text evidence="1">Component of the eukaryotic translation initiation factor 3 (eIF-3) complex, which is involved in protein synthesis of a specialized repertoire of mRNAs and, together with other initiation factors, stimulates binding of mRNA and methionyl-tRNAi to the 40S ribosome. The eIF-3 complex specifically targets and initiates translation of a subset of mRNAs involved in cell proliferation.</text>
</comment>
<comment type="subunit">
    <text evidence="1">Component of the eukaryotic translation initiation factor 3 (eIF-3) complex. The eIF-3 complex interacts with pix.</text>
</comment>
<comment type="subcellular location">
    <subcellularLocation>
        <location evidence="1">Cytoplasm</location>
    </subcellularLocation>
</comment>
<comment type="similarity">
    <text evidence="1">Belongs to the eIF-3 subunit F family.</text>
</comment>
<reference key="1">
    <citation type="journal article" date="2007" name="Nature">
        <title>Evolution of genes and genomes on the Drosophila phylogeny.</title>
        <authorList>
            <consortium name="Drosophila 12 genomes consortium"/>
        </authorList>
    </citation>
    <scope>NUCLEOTIDE SEQUENCE [LARGE SCALE GENOMIC DNA]</scope>
    <source>
        <strain>Tai18E2 / Tucson 14021-0261.01</strain>
    </source>
</reference>
<dbReference type="EMBL" id="CM000160">
    <property type="protein sequence ID" value="EDW95687.1"/>
    <property type="molecule type" value="Genomic_DNA"/>
</dbReference>
<dbReference type="SMR" id="B4PUG5"/>
<dbReference type="EnsemblMetazoa" id="FBtr0271857">
    <property type="protein sequence ID" value="FBpp0270349"/>
    <property type="gene ID" value="FBgn0242417"/>
</dbReference>
<dbReference type="EnsemblMetazoa" id="XM_002095939.4">
    <property type="protein sequence ID" value="XP_002095975.1"/>
    <property type="gene ID" value="LOC6535319"/>
</dbReference>
<dbReference type="GeneID" id="6535319"/>
<dbReference type="KEGG" id="dya:Dyak_GE25339"/>
<dbReference type="CTD" id="40587"/>
<dbReference type="eggNOG" id="KOG2975">
    <property type="taxonomic scope" value="Eukaryota"/>
</dbReference>
<dbReference type="HOGENOM" id="CLU_027018_0_1_1"/>
<dbReference type="OMA" id="EYFVHFH"/>
<dbReference type="OrthoDB" id="25498at2759"/>
<dbReference type="PhylomeDB" id="B4PUG5"/>
<dbReference type="Proteomes" id="UP000002282">
    <property type="component" value="Chromosome 3R"/>
</dbReference>
<dbReference type="GO" id="GO:0016282">
    <property type="term" value="C:eukaryotic 43S preinitiation complex"/>
    <property type="evidence" value="ECO:0007669"/>
    <property type="project" value="UniProtKB-UniRule"/>
</dbReference>
<dbReference type="GO" id="GO:0033290">
    <property type="term" value="C:eukaryotic 48S preinitiation complex"/>
    <property type="evidence" value="ECO:0007669"/>
    <property type="project" value="UniProtKB-UniRule"/>
</dbReference>
<dbReference type="GO" id="GO:0071541">
    <property type="term" value="C:eukaryotic translation initiation factor 3 complex, eIF3m"/>
    <property type="evidence" value="ECO:0007669"/>
    <property type="project" value="TreeGrafter"/>
</dbReference>
<dbReference type="GO" id="GO:0140492">
    <property type="term" value="F:metal-dependent deubiquitinase activity"/>
    <property type="evidence" value="ECO:0007669"/>
    <property type="project" value="EnsemblMetazoa"/>
</dbReference>
<dbReference type="GO" id="GO:0003743">
    <property type="term" value="F:translation initiation factor activity"/>
    <property type="evidence" value="ECO:0007669"/>
    <property type="project" value="UniProtKB-UniRule"/>
</dbReference>
<dbReference type="GO" id="GO:0031369">
    <property type="term" value="F:translation initiation factor binding"/>
    <property type="evidence" value="ECO:0007669"/>
    <property type="project" value="InterPro"/>
</dbReference>
<dbReference type="GO" id="GO:0140367">
    <property type="term" value="P:antibacterial innate immune response"/>
    <property type="evidence" value="ECO:0007669"/>
    <property type="project" value="EnsemblMetazoa"/>
</dbReference>
<dbReference type="GO" id="GO:0050829">
    <property type="term" value="P:defense response to Gram-negative bacterium"/>
    <property type="evidence" value="ECO:0007669"/>
    <property type="project" value="EnsemblMetazoa"/>
</dbReference>
<dbReference type="GO" id="GO:0001732">
    <property type="term" value="P:formation of cytoplasmic translation initiation complex"/>
    <property type="evidence" value="ECO:0007669"/>
    <property type="project" value="UniProtKB-UniRule"/>
</dbReference>
<dbReference type="GO" id="GO:0045747">
    <property type="term" value="P:positive regulation of Notch signaling pathway"/>
    <property type="evidence" value="ECO:0007669"/>
    <property type="project" value="EnsemblMetazoa"/>
</dbReference>
<dbReference type="GO" id="GO:0061059">
    <property type="term" value="P:positive regulation of peptidoglycan recognition protein signaling pathway"/>
    <property type="evidence" value="ECO:0007669"/>
    <property type="project" value="EnsemblMetazoa"/>
</dbReference>
<dbReference type="CDD" id="cd08064">
    <property type="entry name" value="MPN_eIF3f"/>
    <property type="match status" value="1"/>
</dbReference>
<dbReference type="FunFam" id="3.40.140.10:FF:000014">
    <property type="entry name" value="Eukaryotic translation initiation factor 3 subunit F"/>
    <property type="match status" value="1"/>
</dbReference>
<dbReference type="Gene3D" id="3.40.140.10">
    <property type="entry name" value="Cytidine Deaminase, domain 2"/>
    <property type="match status" value="1"/>
</dbReference>
<dbReference type="HAMAP" id="MF_03005">
    <property type="entry name" value="eIF3f"/>
    <property type="match status" value="1"/>
</dbReference>
<dbReference type="InterPro" id="IPR027531">
    <property type="entry name" value="eIF3f"/>
</dbReference>
<dbReference type="InterPro" id="IPR024969">
    <property type="entry name" value="EIF3F/CSN6-like_C"/>
</dbReference>
<dbReference type="InterPro" id="IPR000555">
    <property type="entry name" value="JAMM/MPN+_dom"/>
</dbReference>
<dbReference type="InterPro" id="IPR037518">
    <property type="entry name" value="MPN"/>
</dbReference>
<dbReference type="PANTHER" id="PTHR10540:SF6">
    <property type="entry name" value="EUKARYOTIC TRANSLATION INITIATION FACTOR 3 SUBUNIT F"/>
    <property type="match status" value="1"/>
</dbReference>
<dbReference type="PANTHER" id="PTHR10540">
    <property type="entry name" value="EUKARYOTIC TRANSLATION INITIATION FACTOR 3 SUBUNIT F-RELATED"/>
    <property type="match status" value="1"/>
</dbReference>
<dbReference type="Pfam" id="PF01398">
    <property type="entry name" value="JAB"/>
    <property type="match status" value="1"/>
</dbReference>
<dbReference type="Pfam" id="PF13012">
    <property type="entry name" value="MitMem_reg"/>
    <property type="match status" value="1"/>
</dbReference>
<dbReference type="SMART" id="SM00232">
    <property type="entry name" value="JAB_MPN"/>
    <property type="match status" value="1"/>
</dbReference>
<dbReference type="PROSITE" id="PS50249">
    <property type="entry name" value="MPN"/>
    <property type="match status" value="1"/>
</dbReference>
<organism>
    <name type="scientific">Drosophila yakuba</name>
    <name type="common">Fruit fly</name>
    <dbReference type="NCBI Taxonomy" id="7245"/>
    <lineage>
        <taxon>Eukaryota</taxon>
        <taxon>Metazoa</taxon>
        <taxon>Ecdysozoa</taxon>
        <taxon>Arthropoda</taxon>
        <taxon>Hexapoda</taxon>
        <taxon>Insecta</taxon>
        <taxon>Pterygota</taxon>
        <taxon>Neoptera</taxon>
        <taxon>Endopterygota</taxon>
        <taxon>Diptera</taxon>
        <taxon>Brachycera</taxon>
        <taxon>Muscomorpha</taxon>
        <taxon>Ephydroidea</taxon>
        <taxon>Drosophilidae</taxon>
        <taxon>Drosophila</taxon>
        <taxon>Sophophora</taxon>
    </lineage>
</organism>
<keyword id="KW-0963">Cytoplasm</keyword>
<keyword id="KW-0396">Initiation factor</keyword>
<keyword id="KW-0648">Protein biosynthesis</keyword>
<protein>
    <recommendedName>
        <fullName evidence="1">Eukaryotic translation initiation factor 3 subunit F-1</fullName>
        <shortName evidence="1">eIF3f-1</shortName>
    </recommendedName>
    <alternativeName>
        <fullName evidence="1">Eukaryotic translation initiation factor 3 subunit 5-1</fullName>
    </alternativeName>
</protein>